<protein>
    <recommendedName>
        <fullName evidence="1">Polyribonucleotide nucleotidyltransferase</fullName>
        <ecNumber evidence="1">2.7.7.8</ecNumber>
    </recommendedName>
    <alternativeName>
        <fullName evidence="1">Polynucleotide phosphorylase</fullName>
        <shortName evidence="1">PNPase</shortName>
    </alternativeName>
</protein>
<proteinExistence type="inferred from homology"/>
<reference key="1">
    <citation type="journal article" date="2005" name="J. Bacteriol.">
        <title>Complete genome sequence and analysis of the multiresistant nosocomial pathogen Corynebacterium jeikeium K411, a lipid-requiring bacterium of the human skin flora.</title>
        <authorList>
            <person name="Tauch A."/>
            <person name="Kaiser O."/>
            <person name="Hain T."/>
            <person name="Goesmann A."/>
            <person name="Weisshaar B."/>
            <person name="Albersmeier A."/>
            <person name="Bekel T."/>
            <person name="Bischoff N."/>
            <person name="Brune I."/>
            <person name="Chakraborty T."/>
            <person name="Kalinowski J."/>
            <person name="Meyer F."/>
            <person name="Rupp O."/>
            <person name="Schneiker S."/>
            <person name="Viehoever P."/>
            <person name="Puehler A."/>
        </authorList>
    </citation>
    <scope>NUCLEOTIDE SEQUENCE [LARGE SCALE GENOMIC DNA]</scope>
    <source>
        <strain>K411</strain>
    </source>
</reference>
<evidence type="ECO:0000255" key="1">
    <source>
        <dbReference type="HAMAP-Rule" id="MF_01595"/>
    </source>
</evidence>
<dbReference type="EC" id="2.7.7.8" evidence="1"/>
<dbReference type="EMBL" id="CR931997">
    <property type="protein sequence ID" value="CAI37296.1"/>
    <property type="molecule type" value="Genomic_DNA"/>
</dbReference>
<dbReference type="RefSeq" id="WP_011273674.1">
    <property type="nucleotide sequence ID" value="NC_007164.1"/>
</dbReference>
<dbReference type="SMR" id="Q4JV61"/>
<dbReference type="STRING" id="306537.jk1132"/>
<dbReference type="KEGG" id="cjk:jk1132"/>
<dbReference type="PATRIC" id="fig|306537.10.peg.1145"/>
<dbReference type="eggNOG" id="COG1185">
    <property type="taxonomic scope" value="Bacteria"/>
</dbReference>
<dbReference type="HOGENOM" id="CLU_004217_2_2_11"/>
<dbReference type="OrthoDB" id="9804305at2"/>
<dbReference type="Proteomes" id="UP000000545">
    <property type="component" value="Chromosome"/>
</dbReference>
<dbReference type="GO" id="GO:0005829">
    <property type="term" value="C:cytosol"/>
    <property type="evidence" value="ECO:0007669"/>
    <property type="project" value="TreeGrafter"/>
</dbReference>
<dbReference type="GO" id="GO:0000175">
    <property type="term" value="F:3'-5'-RNA exonuclease activity"/>
    <property type="evidence" value="ECO:0007669"/>
    <property type="project" value="TreeGrafter"/>
</dbReference>
<dbReference type="GO" id="GO:0000287">
    <property type="term" value="F:magnesium ion binding"/>
    <property type="evidence" value="ECO:0007669"/>
    <property type="project" value="UniProtKB-UniRule"/>
</dbReference>
<dbReference type="GO" id="GO:0004654">
    <property type="term" value="F:polyribonucleotide nucleotidyltransferase activity"/>
    <property type="evidence" value="ECO:0007669"/>
    <property type="project" value="UniProtKB-UniRule"/>
</dbReference>
<dbReference type="GO" id="GO:0003723">
    <property type="term" value="F:RNA binding"/>
    <property type="evidence" value="ECO:0007669"/>
    <property type="project" value="UniProtKB-UniRule"/>
</dbReference>
<dbReference type="GO" id="GO:0006402">
    <property type="term" value="P:mRNA catabolic process"/>
    <property type="evidence" value="ECO:0007669"/>
    <property type="project" value="UniProtKB-UniRule"/>
</dbReference>
<dbReference type="GO" id="GO:0006396">
    <property type="term" value="P:RNA processing"/>
    <property type="evidence" value="ECO:0007669"/>
    <property type="project" value="InterPro"/>
</dbReference>
<dbReference type="CDD" id="cd02393">
    <property type="entry name" value="KH-I_PNPase"/>
    <property type="match status" value="1"/>
</dbReference>
<dbReference type="CDD" id="cd11364">
    <property type="entry name" value="RNase_PH_PNPase_2"/>
    <property type="match status" value="1"/>
</dbReference>
<dbReference type="FunFam" id="2.40.50.140:FF:000069">
    <property type="entry name" value="Polyribonucleotide nucleotidyltransferase"/>
    <property type="match status" value="1"/>
</dbReference>
<dbReference type="FunFam" id="3.30.1370.10:FF:000001">
    <property type="entry name" value="Polyribonucleotide nucleotidyltransferase"/>
    <property type="match status" value="1"/>
</dbReference>
<dbReference type="FunFam" id="3.30.230.70:FF:000001">
    <property type="entry name" value="Polyribonucleotide nucleotidyltransferase"/>
    <property type="match status" value="1"/>
</dbReference>
<dbReference type="FunFam" id="3.30.230.70:FF:000002">
    <property type="entry name" value="Polyribonucleotide nucleotidyltransferase"/>
    <property type="match status" value="1"/>
</dbReference>
<dbReference type="Gene3D" id="3.30.230.70">
    <property type="entry name" value="GHMP Kinase, N-terminal domain"/>
    <property type="match status" value="2"/>
</dbReference>
<dbReference type="Gene3D" id="3.30.1370.10">
    <property type="entry name" value="K Homology domain, type 1"/>
    <property type="match status" value="1"/>
</dbReference>
<dbReference type="Gene3D" id="2.40.50.140">
    <property type="entry name" value="Nucleic acid-binding proteins"/>
    <property type="match status" value="1"/>
</dbReference>
<dbReference type="HAMAP" id="MF_01595">
    <property type="entry name" value="PNPase"/>
    <property type="match status" value="1"/>
</dbReference>
<dbReference type="InterPro" id="IPR001247">
    <property type="entry name" value="ExoRNase_PH_dom1"/>
</dbReference>
<dbReference type="InterPro" id="IPR036345">
    <property type="entry name" value="ExoRNase_PH_dom2_sf"/>
</dbReference>
<dbReference type="InterPro" id="IPR014069">
    <property type="entry name" value="GPSI/PNP"/>
</dbReference>
<dbReference type="InterPro" id="IPR004087">
    <property type="entry name" value="KH_dom"/>
</dbReference>
<dbReference type="InterPro" id="IPR004088">
    <property type="entry name" value="KH_dom_type_1"/>
</dbReference>
<dbReference type="InterPro" id="IPR036612">
    <property type="entry name" value="KH_dom_type_1_sf"/>
</dbReference>
<dbReference type="InterPro" id="IPR012340">
    <property type="entry name" value="NA-bd_OB-fold"/>
</dbReference>
<dbReference type="InterPro" id="IPR012162">
    <property type="entry name" value="PNPase"/>
</dbReference>
<dbReference type="InterPro" id="IPR027408">
    <property type="entry name" value="PNPase/RNase_PH_dom_sf"/>
</dbReference>
<dbReference type="InterPro" id="IPR015848">
    <property type="entry name" value="PNPase_PH_RNA-bd_bac/org-type"/>
</dbReference>
<dbReference type="InterPro" id="IPR036456">
    <property type="entry name" value="PNPase_PH_RNA-bd_sf"/>
</dbReference>
<dbReference type="InterPro" id="IPR020568">
    <property type="entry name" value="Ribosomal_Su5_D2-typ_SF"/>
</dbReference>
<dbReference type="InterPro" id="IPR003029">
    <property type="entry name" value="S1_domain"/>
</dbReference>
<dbReference type="NCBIfam" id="TIGR03591">
    <property type="entry name" value="polynuc_phos"/>
    <property type="match status" value="1"/>
</dbReference>
<dbReference type="NCBIfam" id="TIGR02696">
    <property type="entry name" value="pppGpp_PNP"/>
    <property type="match status" value="1"/>
</dbReference>
<dbReference type="NCBIfam" id="NF008805">
    <property type="entry name" value="PRK11824.1"/>
    <property type="match status" value="1"/>
</dbReference>
<dbReference type="PANTHER" id="PTHR11252">
    <property type="entry name" value="POLYRIBONUCLEOTIDE NUCLEOTIDYLTRANSFERASE"/>
    <property type="match status" value="1"/>
</dbReference>
<dbReference type="PANTHER" id="PTHR11252:SF0">
    <property type="entry name" value="POLYRIBONUCLEOTIDE NUCLEOTIDYLTRANSFERASE 1, MITOCHONDRIAL"/>
    <property type="match status" value="1"/>
</dbReference>
<dbReference type="Pfam" id="PF00013">
    <property type="entry name" value="KH_1"/>
    <property type="match status" value="1"/>
</dbReference>
<dbReference type="Pfam" id="PF03726">
    <property type="entry name" value="PNPase"/>
    <property type="match status" value="1"/>
</dbReference>
<dbReference type="Pfam" id="PF01138">
    <property type="entry name" value="RNase_PH"/>
    <property type="match status" value="2"/>
</dbReference>
<dbReference type="Pfam" id="PF00575">
    <property type="entry name" value="S1"/>
    <property type="match status" value="1"/>
</dbReference>
<dbReference type="PIRSF" id="PIRSF005499">
    <property type="entry name" value="PNPase"/>
    <property type="match status" value="1"/>
</dbReference>
<dbReference type="SMART" id="SM00322">
    <property type="entry name" value="KH"/>
    <property type="match status" value="1"/>
</dbReference>
<dbReference type="SMART" id="SM00316">
    <property type="entry name" value="S1"/>
    <property type="match status" value="1"/>
</dbReference>
<dbReference type="SUPFAM" id="SSF54791">
    <property type="entry name" value="Eukaryotic type KH-domain (KH-domain type I)"/>
    <property type="match status" value="1"/>
</dbReference>
<dbReference type="SUPFAM" id="SSF50249">
    <property type="entry name" value="Nucleic acid-binding proteins"/>
    <property type="match status" value="1"/>
</dbReference>
<dbReference type="SUPFAM" id="SSF46915">
    <property type="entry name" value="Polynucleotide phosphorylase/guanosine pentaphosphate synthase (PNPase/GPSI), domain 3"/>
    <property type="match status" value="1"/>
</dbReference>
<dbReference type="SUPFAM" id="SSF55666">
    <property type="entry name" value="Ribonuclease PH domain 2-like"/>
    <property type="match status" value="2"/>
</dbReference>
<dbReference type="SUPFAM" id="SSF54211">
    <property type="entry name" value="Ribosomal protein S5 domain 2-like"/>
    <property type="match status" value="2"/>
</dbReference>
<dbReference type="PROSITE" id="PS50084">
    <property type="entry name" value="KH_TYPE_1"/>
    <property type="match status" value="1"/>
</dbReference>
<dbReference type="PROSITE" id="PS50126">
    <property type="entry name" value="S1"/>
    <property type="match status" value="1"/>
</dbReference>
<name>PNP_CORJK</name>
<accession>Q4JV61</accession>
<organism>
    <name type="scientific">Corynebacterium jeikeium (strain K411)</name>
    <dbReference type="NCBI Taxonomy" id="306537"/>
    <lineage>
        <taxon>Bacteria</taxon>
        <taxon>Bacillati</taxon>
        <taxon>Actinomycetota</taxon>
        <taxon>Actinomycetes</taxon>
        <taxon>Mycobacteriales</taxon>
        <taxon>Corynebacteriaceae</taxon>
        <taxon>Corynebacterium</taxon>
    </lineage>
</organism>
<gene>
    <name evidence="1" type="primary">pnp</name>
    <name type="ordered locus">jk1132</name>
</gene>
<sequence>MSTKKQNIQAELVDPDAGVWEVEATIDNGDFGTRSIRFETGLLARQADGAVTAYLDEDTMLLSTTAASRQPREGIDFFPLTVDVEERMYSVGRIPGSFFRREGRPGTDAILAARLIDRPLRPTFVRGLRNEVQVIVTVLSMDPKDRYDVLAINGASASTQLSGLPVSGPVGGVRMALVVDSDHPEGQWVAFPTREQEEKAIFELVVAGRVTEPVKPARGRGRGRGKGAGSSEPNVAVMMVEAGATDNVVERIAEGAPAPTEEVVAQGIEAAKPFIATLCEAQNALAKAVDAETREFELFPPYGEDVFASVQAEALDALEDIMAIADKQERDEALAANMQANVDELLPEFPEREAEIRAAHNEVTKAVVRRRILEDGFRIDGRDSTTIRDLGIVVQLIPRAHGSALFERGETQILGVTTLDMLKMEQQIDSLGPETSKRYIHHYNFPPYSTGETGRVGSPKRREIGHGALAERALTPVIPSRDDFPYTIRQVSEALSSNGSTSMGSVCASTLSLYNAGVPLKAPVAGIAMGLVTGKVGKAGKDKYVTLTDILGAEDAFGDMDFKVAGTPDFVTALQLDTKLDGIPSDVLAEALQQARTARLEILQLMEEAIDSPDDMSDLAPHITSINIPQNKIGEVIGPKGKTINQITEETGANITIEDDGTVFISAVGGESAREAEEKINAIANPQQPKVGDRFLGTVVKTTAFGAFVSLLPGRDGLIHISNLGGDRRIERVEDEVSVGDKLEVEIADIDNRGKISLVLVEEN</sequence>
<feature type="chain" id="PRO_0000329611" description="Polyribonucleotide nucleotidyltransferase">
    <location>
        <begin position="1"/>
        <end position="764"/>
    </location>
</feature>
<feature type="domain" description="KH" evidence="1">
    <location>
        <begin position="621"/>
        <end position="680"/>
    </location>
</feature>
<feature type="domain" description="S1 motif" evidence="1">
    <location>
        <begin position="692"/>
        <end position="761"/>
    </location>
</feature>
<feature type="binding site" evidence="1">
    <location>
        <position position="555"/>
    </location>
    <ligand>
        <name>Mg(2+)</name>
        <dbReference type="ChEBI" id="CHEBI:18420"/>
    </ligand>
</feature>
<feature type="binding site" evidence="1">
    <location>
        <position position="561"/>
    </location>
    <ligand>
        <name>Mg(2+)</name>
        <dbReference type="ChEBI" id="CHEBI:18420"/>
    </ligand>
</feature>
<comment type="function">
    <text evidence="1">Involved in mRNA degradation. Catalyzes the phosphorolysis of single-stranded polyribonucleotides processively in the 3'- to 5'-direction.</text>
</comment>
<comment type="catalytic activity">
    <reaction evidence="1">
        <text>RNA(n+1) + phosphate = RNA(n) + a ribonucleoside 5'-diphosphate</text>
        <dbReference type="Rhea" id="RHEA:22096"/>
        <dbReference type="Rhea" id="RHEA-COMP:14527"/>
        <dbReference type="Rhea" id="RHEA-COMP:17342"/>
        <dbReference type="ChEBI" id="CHEBI:43474"/>
        <dbReference type="ChEBI" id="CHEBI:57930"/>
        <dbReference type="ChEBI" id="CHEBI:140395"/>
        <dbReference type="EC" id="2.7.7.8"/>
    </reaction>
</comment>
<comment type="cofactor">
    <cofactor evidence="1">
        <name>Mg(2+)</name>
        <dbReference type="ChEBI" id="CHEBI:18420"/>
    </cofactor>
</comment>
<comment type="subcellular location">
    <subcellularLocation>
        <location evidence="1">Cytoplasm</location>
    </subcellularLocation>
</comment>
<comment type="similarity">
    <text evidence="1">Belongs to the polyribonucleotide nucleotidyltransferase family.</text>
</comment>
<keyword id="KW-0963">Cytoplasm</keyword>
<keyword id="KW-0460">Magnesium</keyword>
<keyword id="KW-0479">Metal-binding</keyword>
<keyword id="KW-0548">Nucleotidyltransferase</keyword>
<keyword id="KW-1185">Reference proteome</keyword>
<keyword id="KW-0694">RNA-binding</keyword>
<keyword id="KW-0808">Transferase</keyword>